<comment type="function">
    <text evidence="2">Hydrolyzes the non-reducing end N-acetyl-D-hexosamine and/or sulfated N-acetyl-D-hexosamine of glycoconjugates, such as the oligosaccharide moieties from proteins and neutral glycolipids, or from certain mucopolysaccharides. The isozyme S is as active as the isozyme A on the anionic bis-sulfated glycans, the chondroitin-6-sulfate trisaccharide (C6S-3), and the dermatan sulfate pentasaccharide, and the sulfated glycosphingolipid SM2. The isozyme B does not hydrolyze each of these substrates, however hydrolyzes efficiently neutral oligosaccharide. Only the isozyme A is responsible for the degradation of GM2 gangliosides in the presence of GM2A.</text>
</comment>
<comment type="catalytic activity">
    <reaction evidence="2">
        <text>Hydrolysis of terminal non-reducing N-acetyl-D-hexosamine residues in N-acetyl-beta-D-hexosaminides.</text>
        <dbReference type="EC" id="3.2.1.52"/>
    </reaction>
</comment>
<comment type="catalytic activity">
    <reaction evidence="2">
        <text>N-acetyl-beta-D-galactosaminyl-(1-&gt;4)-beta-D-3-sulfogalactosyl-(1-&gt;4)-beta-D-glucosyl-(1&lt;-&gt;1')-ceramide + H2O = a beta-D-3-sulfogalactosyl-(1-&gt;4)-beta-D-glucosyl-(1&lt;-&gt;1')-ceramide + N-acetyl-beta-D-galactosamine</text>
        <dbReference type="Rhea" id="RHEA:48276"/>
        <dbReference type="ChEBI" id="CHEBI:15377"/>
        <dbReference type="ChEBI" id="CHEBI:28497"/>
        <dbReference type="ChEBI" id="CHEBI:90163"/>
        <dbReference type="ChEBI" id="CHEBI:90164"/>
    </reaction>
    <physiologicalReaction direction="left-to-right" evidence="2">
        <dbReference type="Rhea" id="RHEA:48277"/>
    </physiologicalReaction>
</comment>
<comment type="catalytic activity">
    <reaction evidence="2">
        <text>a ganglioside GM2 (d18:1(4E)) + H2O = a ganglioside GM3 (d18:1(4E)) + N-acetyl-beta-D-galactosamine</text>
        <dbReference type="Rhea" id="RHEA:47940"/>
        <dbReference type="ChEBI" id="CHEBI:15377"/>
        <dbReference type="ChEBI" id="CHEBI:28497"/>
        <dbReference type="ChEBI" id="CHEBI:60065"/>
        <dbReference type="ChEBI" id="CHEBI:71502"/>
    </reaction>
    <physiologicalReaction direction="left-to-right" evidence="2">
        <dbReference type="Rhea" id="RHEA:47941"/>
    </physiologicalReaction>
</comment>
<comment type="catalytic activity">
    <reaction evidence="2">
        <text>a ganglioside GM2 + H2O = a ganglioside GM3 + N-acetyl-beta-D-galactosamine</text>
        <dbReference type="Rhea" id="RHEA:47968"/>
        <dbReference type="ChEBI" id="CHEBI:15377"/>
        <dbReference type="ChEBI" id="CHEBI:28497"/>
        <dbReference type="ChEBI" id="CHEBI:79210"/>
        <dbReference type="ChEBI" id="CHEBI:79218"/>
    </reaction>
    <physiologicalReaction direction="left-to-right" evidence="2">
        <dbReference type="Rhea" id="RHEA:47969"/>
    </physiologicalReaction>
</comment>
<comment type="catalytic activity">
    <reaction evidence="2">
        <text>beta-D-GalNAc-(1-&gt;4)-alpha-L-IdoA-(1-&gt;3)-beta-D-GalNAc-4-sulfate-(1-&gt;4)-alpha-L-IdoA-(1-&gt;3)-D-GalNAc-4-sulfate + H2O = alpha-L-IdoA-(1-&gt;3)-beta-D-GalNAc-4-sulfate-(1-&gt;4)-alpha-L-IdoA-(1-&gt;3)-D-GalNAc-4-sulfate + N-acetyl-D-galactosamine</text>
        <dbReference type="Rhea" id="RHEA:64372"/>
        <dbReference type="ChEBI" id="CHEBI:15377"/>
        <dbReference type="ChEBI" id="CHEBI:28037"/>
        <dbReference type="ChEBI" id="CHEBI:152565"/>
        <dbReference type="ChEBI" id="CHEBI:152566"/>
    </reaction>
    <physiologicalReaction direction="left-to-right" evidence="2">
        <dbReference type="Rhea" id="RHEA:64373"/>
    </physiologicalReaction>
</comment>
<comment type="catalytic activity">
    <reaction evidence="2">
        <text>N-acetyl-beta-D-6-sulfogalactosaminyl-(1-&gt;4)-alpha-L-iduronyl-(1-&gt;3)-N-acetyl-D-6-sulfogalactosamine + H2O = alpha-L-iduronyl-(1-&gt;3)-N-acetyl-D-6-sulfogalactosamine + N-acetyl-D-6-sulfogalactosamine</text>
        <dbReference type="Rhea" id="RHEA:64384"/>
        <dbReference type="ChEBI" id="CHEBI:15377"/>
        <dbReference type="ChEBI" id="CHEBI:152567"/>
        <dbReference type="ChEBI" id="CHEBI:152568"/>
        <dbReference type="ChEBI" id="CHEBI:153064"/>
    </reaction>
    <physiologicalReaction direction="left-to-right" evidence="2">
        <dbReference type="Rhea" id="RHEA:64385"/>
    </physiologicalReaction>
</comment>
<comment type="activity regulation">
    <text evidence="2">Addition of GM2A stimulates the hydrolysis of sulfated glycosphingolipid SM2 and the ganglioside GM2.</text>
</comment>
<comment type="subunit">
    <text evidence="2">There are 3 beta-hexosaminidase isozymes: isozyme A (hexosaminidase A) is a heterodimer composed of one subunit alpha and one subunit beta (chain A and B); isozyme B (hexosaminidase B) is a homodimer of two beta subunits (two chains A and B); isozyme S (hexosaminidase S) is a homodimer of two alpha subunits. The composition of the dimer (isozyme A versus isozyme S) has a significant effect on the substrate specificity of the alpha subunit active site.</text>
</comment>
<comment type="subcellular location">
    <subcellularLocation>
        <location>Lysosome</location>
    </subcellularLocation>
</comment>
<comment type="tissue specificity">
    <text evidence="4">Ubiquitous. Most abundant in testis, adrenal, epididymis and heart. Low levels seen in the liver.</text>
</comment>
<comment type="similarity">
    <text evidence="5">Belongs to the glycosyl hydrolase 20 family.</text>
</comment>
<protein>
    <recommendedName>
        <fullName evidence="5">Beta-hexosaminidase subunit alpha</fullName>
        <ecNumber evidence="2">3.2.1.52</ecNumber>
    </recommendedName>
    <alternativeName>
        <fullName>Beta-N-acetylhexosaminidase subunit alpha</fullName>
        <shortName>Hexosaminidase subunit A</shortName>
    </alternativeName>
    <alternativeName>
        <fullName>N-acetyl-beta-glucosaminidase subunit alpha</fullName>
    </alternativeName>
</protein>
<organism>
    <name type="scientific">Mus musculus</name>
    <name type="common">Mouse</name>
    <dbReference type="NCBI Taxonomy" id="10090"/>
    <lineage>
        <taxon>Eukaryota</taxon>
        <taxon>Metazoa</taxon>
        <taxon>Chordata</taxon>
        <taxon>Craniata</taxon>
        <taxon>Vertebrata</taxon>
        <taxon>Euteleostomi</taxon>
        <taxon>Mammalia</taxon>
        <taxon>Eutheria</taxon>
        <taxon>Euarchontoglires</taxon>
        <taxon>Glires</taxon>
        <taxon>Rodentia</taxon>
        <taxon>Myomorpha</taxon>
        <taxon>Muroidea</taxon>
        <taxon>Muridae</taxon>
        <taxon>Murinae</taxon>
        <taxon>Mus</taxon>
        <taxon>Mus</taxon>
    </lineage>
</organism>
<evidence type="ECO:0000250" key="1"/>
<evidence type="ECO:0000250" key="2">
    <source>
        <dbReference type="UniProtKB" id="P06865"/>
    </source>
</evidence>
<evidence type="ECO:0000255" key="3"/>
<evidence type="ECO:0000269" key="4">
    <source>
    </source>
</evidence>
<evidence type="ECO:0000305" key="5"/>
<evidence type="ECO:0000312" key="6">
    <source>
        <dbReference type="MGI" id="MGI:96073"/>
    </source>
</evidence>
<reference key="1">
    <citation type="journal article" date="1992" name="Biochem. J.">
        <title>Cloning and sequence analysis of a cDNA encoding the alpha-subunit of mouse beta-N-acetylhexosaminidase and comparison with the human enzyme.</title>
        <authorList>
            <person name="Beccari T."/>
            <person name="Hoade J."/>
            <person name="Orlacchio A."/>
            <person name="Stirling J.L."/>
        </authorList>
    </citation>
    <scope>NUCLEOTIDE SEQUENCE [MRNA]</scope>
    <source>
        <tissue>Testis</tissue>
    </source>
</reference>
<reference key="2">
    <citation type="journal article" date="1994" name="Biochem. Mol. Biol. Int.">
        <title>Organization of the gene for the alpha-subunit of mouse beta-N-acetylhexosaminidase (HEXa).</title>
        <authorList>
            <person name="Bianconi S."/>
            <person name="Beccari T."/>
            <person name="Stirling J.L."/>
            <person name="Sheardown S."/>
            <person name="Orlacchio A."/>
        </authorList>
    </citation>
    <scope>NUCLEOTIDE SEQUENCE [GENOMIC DNA]</scope>
</reference>
<reference key="3">
    <citation type="journal article" date="1994" name="Genomics">
        <title>Structure and expression of the mouse beta-hexosaminidase genes, Hexa and Hexb.</title>
        <authorList>
            <person name="Yamanaka S."/>
            <person name="Johnson O.N."/>
            <person name="Norflus F."/>
            <person name="Boles D.J."/>
            <person name="Proia R.L."/>
        </authorList>
    </citation>
    <scope>NUCLEOTIDE SEQUENCE [GENOMIC DNA]</scope>
    <source>
        <strain>C57BL/6 X CBA</strain>
        <tissue>Liver</tissue>
    </source>
</reference>
<reference key="4">
    <citation type="journal article" date="1994" name="Genomics">
        <title>Structural organization, sequence, and expression of the mouse HEXA gene encoding the alpha subunit of hexosaminidase A.</title>
        <authorList>
            <person name="Wakamatsu N."/>
            <person name="Benoit G."/>
            <person name="Lamhonwah A.-M."/>
            <person name="Zhang Z.-X."/>
            <person name="Trasler J.M."/>
            <person name="Triggs-Raine B.L."/>
            <person name="Gravel R.A."/>
        </authorList>
    </citation>
    <scope>NUCLEOTIDE SEQUENCE [GENOMIC DNA]</scope>
    <scope>TISSUE SPECIFICITY</scope>
    <source>
        <strain>129/Sv</strain>
        <tissue>Liver</tissue>
    </source>
</reference>
<reference key="5">
    <citation type="journal article" date="2005" name="Science">
        <title>The transcriptional landscape of the mammalian genome.</title>
        <authorList>
            <person name="Carninci P."/>
            <person name="Kasukawa T."/>
            <person name="Katayama S."/>
            <person name="Gough J."/>
            <person name="Frith M.C."/>
            <person name="Maeda N."/>
            <person name="Oyama R."/>
            <person name="Ravasi T."/>
            <person name="Lenhard B."/>
            <person name="Wells C."/>
            <person name="Kodzius R."/>
            <person name="Shimokawa K."/>
            <person name="Bajic V.B."/>
            <person name="Brenner S.E."/>
            <person name="Batalov S."/>
            <person name="Forrest A.R."/>
            <person name="Zavolan M."/>
            <person name="Davis M.J."/>
            <person name="Wilming L.G."/>
            <person name="Aidinis V."/>
            <person name="Allen J.E."/>
            <person name="Ambesi-Impiombato A."/>
            <person name="Apweiler R."/>
            <person name="Aturaliya R.N."/>
            <person name="Bailey T.L."/>
            <person name="Bansal M."/>
            <person name="Baxter L."/>
            <person name="Beisel K.W."/>
            <person name="Bersano T."/>
            <person name="Bono H."/>
            <person name="Chalk A.M."/>
            <person name="Chiu K.P."/>
            <person name="Choudhary V."/>
            <person name="Christoffels A."/>
            <person name="Clutterbuck D.R."/>
            <person name="Crowe M.L."/>
            <person name="Dalla E."/>
            <person name="Dalrymple B.P."/>
            <person name="de Bono B."/>
            <person name="Della Gatta G."/>
            <person name="di Bernardo D."/>
            <person name="Down T."/>
            <person name="Engstrom P."/>
            <person name="Fagiolini M."/>
            <person name="Faulkner G."/>
            <person name="Fletcher C.F."/>
            <person name="Fukushima T."/>
            <person name="Furuno M."/>
            <person name="Futaki S."/>
            <person name="Gariboldi M."/>
            <person name="Georgii-Hemming P."/>
            <person name="Gingeras T.R."/>
            <person name="Gojobori T."/>
            <person name="Green R.E."/>
            <person name="Gustincich S."/>
            <person name="Harbers M."/>
            <person name="Hayashi Y."/>
            <person name="Hensch T.K."/>
            <person name="Hirokawa N."/>
            <person name="Hill D."/>
            <person name="Huminiecki L."/>
            <person name="Iacono M."/>
            <person name="Ikeo K."/>
            <person name="Iwama A."/>
            <person name="Ishikawa T."/>
            <person name="Jakt M."/>
            <person name="Kanapin A."/>
            <person name="Katoh M."/>
            <person name="Kawasawa Y."/>
            <person name="Kelso J."/>
            <person name="Kitamura H."/>
            <person name="Kitano H."/>
            <person name="Kollias G."/>
            <person name="Krishnan S.P."/>
            <person name="Kruger A."/>
            <person name="Kummerfeld S.K."/>
            <person name="Kurochkin I.V."/>
            <person name="Lareau L.F."/>
            <person name="Lazarevic D."/>
            <person name="Lipovich L."/>
            <person name="Liu J."/>
            <person name="Liuni S."/>
            <person name="McWilliam S."/>
            <person name="Madan Babu M."/>
            <person name="Madera M."/>
            <person name="Marchionni L."/>
            <person name="Matsuda H."/>
            <person name="Matsuzawa S."/>
            <person name="Miki H."/>
            <person name="Mignone F."/>
            <person name="Miyake S."/>
            <person name="Morris K."/>
            <person name="Mottagui-Tabar S."/>
            <person name="Mulder N."/>
            <person name="Nakano N."/>
            <person name="Nakauchi H."/>
            <person name="Ng P."/>
            <person name="Nilsson R."/>
            <person name="Nishiguchi S."/>
            <person name="Nishikawa S."/>
            <person name="Nori F."/>
            <person name="Ohara O."/>
            <person name="Okazaki Y."/>
            <person name="Orlando V."/>
            <person name="Pang K.C."/>
            <person name="Pavan W.J."/>
            <person name="Pavesi G."/>
            <person name="Pesole G."/>
            <person name="Petrovsky N."/>
            <person name="Piazza S."/>
            <person name="Reed J."/>
            <person name="Reid J.F."/>
            <person name="Ring B.Z."/>
            <person name="Ringwald M."/>
            <person name="Rost B."/>
            <person name="Ruan Y."/>
            <person name="Salzberg S.L."/>
            <person name="Sandelin A."/>
            <person name="Schneider C."/>
            <person name="Schoenbach C."/>
            <person name="Sekiguchi K."/>
            <person name="Semple C.A."/>
            <person name="Seno S."/>
            <person name="Sessa L."/>
            <person name="Sheng Y."/>
            <person name="Shibata Y."/>
            <person name="Shimada H."/>
            <person name="Shimada K."/>
            <person name="Silva D."/>
            <person name="Sinclair B."/>
            <person name="Sperling S."/>
            <person name="Stupka E."/>
            <person name="Sugiura K."/>
            <person name="Sultana R."/>
            <person name="Takenaka Y."/>
            <person name="Taki K."/>
            <person name="Tammoja K."/>
            <person name="Tan S.L."/>
            <person name="Tang S."/>
            <person name="Taylor M.S."/>
            <person name="Tegner J."/>
            <person name="Teichmann S.A."/>
            <person name="Ueda H.R."/>
            <person name="van Nimwegen E."/>
            <person name="Verardo R."/>
            <person name="Wei C.L."/>
            <person name="Yagi K."/>
            <person name="Yamanishi H."/>
            <person name="Zabarovsky E."/>
            <person name="Zhu S."/>
            <person name="Zimmer A."/>
            <person name="Hide W."/>
            <person name="Bult C."/>
            <person name="Grimmond S.M."/>
            <person name="Teasdale R.D."/>
            <person name="Liu E.T."/>
            <person name="Brusic V."/>
            <person name="Quackenbush J."/>
            <person name="Wahlestedt C."/>
            <person name="Mattick J.S."/>
            <person name="Hume D.A."/>
            <person name="Kai C."/>
            <person name="Sasaki D."/>
            <person name="Tomaru Y."/>
            <person name="Fukuda S."/>
            <person name="Kanamori-Katayama M."/>
            <person name="Suzuki M."/>
            <person name="Aoki J."/>
            <person name="Arakawa T."/>
            <person name="Iida J."/>
            <person name="Imamura K."/>
            <person name="Itoh M."/>
            <person name="Kato T."/>
            <person name="Kawaji H."/>
            <person name="Kawagashira N."/>
            <person name="Kawashima T."/>
            <person name="Kojima M."/>
            <person name="Kondo S."/>
            <person name="Konno H."/>
            <person name="Nakano K."/>
            <person name="Ninomiya N."/>
            <person name="Nishio T."/>
            <person name="Okada M."/>
            <person name="Plessy C."/>
            <person name="Shibata K."/>
            <person name="Shiraki T."/>
            <person name="Suzuki S."/>
            <person name="Tagami M."/>
            <person name="Waki K."/>
            <person name="Watahiki A."/>
            <person name="Okamura-Oho Y."/>
            <person name="Suzuki H."/>
            <person name="Kawai J."/>
            <person name="Hayashizaki Y."/>
        </authorList>
    </citation>
    <scope>NUCLEOTIDE SEQUENCE [LARGE SCALE MRNA]</scope>
    <source>
        <strain>BALB/cJ</strain>
        <strain>C57BL/6J</strain>
        <tissue>Tongue</tissue>
    </source>
</reference>
<reference key="6">
    <citation type="submission" date="2002-04" db="EMBL/GenBank/DDBJ databases">
        <authorList>
            <person name="Mural R.J."/>
            <person name="Adams M.D."/>
            <person name="Myers E.W."/>
            <person name="Smith H.O."/>
            <person name="Venter J.C."/>
        </authorList>
    </citation>
    <scope>NUCLEOTIDE SEQUENCE [LARGE SCALE GENOMIC DNA]</scope>
</reference>
<reference key="7">
    <citation type="journal article" date="2004" name="Genome Res.">
        <title>The status, quality, and expansion of the NIH full-length cDNA project: the Mammalian Gene Collection (MGC).</title>
        <authorList>
            <consortium name="The MGC Project Team"/>
        </authorList>
    </citation>
    <scope>NUCLEOTIDE SEQUENCE [LARGE SCALE MRNA]</scope>
    <source>
        <strain>FVB/N</strain>
        <tissue>Colon</tissue>
    </source>
</reference>
<reference key="8">
    <citation type="journal article" date="2010" name="Cell">
        <title>A tissue-specific atlas of mouse protein phosphorylation and expression.</title>
        <authorList>
            <person name="Huttlin E.L."/>
            <person name="Jedrychowski M.P."/>
            <person name="Elias J.E."/>
            <person name="Goswami T."/>
            <person name="Rad R."/>
            <person name="Beausoleil S.A."/>
            <person name="Villen J."/>
            <person name="Haas W."/>
            <person name="Sowa M.E."/>
            <person name="Gygi S.P."/>
        </authorList>
    </citation>
    <scope>IDENTIFICATION BY MASS SPECTROMETRY [LARGE SCALE ANALYSIS]</scope>
    <source>
        <tissue>Brain</tissue>
        <tissue>Kidney</tissue>
        <tissue>Liver</tissue>
        <tissue>Lung</tissue>
        <tissue>Spleen</tissue>
        <tissue>Testis</tissue>
    </source>
</reference>
<sequence>MAGCRLWVSLLLAAALACLATALWPWPQYIQTYHRRYTLYPNNFQFRYHVSSAAQAGCVVLDEAFRRYRNLLFGSGSWPRPSFSNKQQTLGKNILVVSVVTAECNEFPNLESVENYTLTINDDQCLLASETVWGALRGLETFSQLVWKSAEGTFFINKTKIKDFPRFPHRGVLLDTSRHYLPLSSILDTLDVMAYNKFNVFHWHLVDDSSFPYESFTFPELTRKGSFNPVTHIYTAQDVKEVIEYARLRGIRVLAEFDTPGHTLSWGPGAPGLLTPCYSGSHLSGTFGPVNPSLNSTYDFMSTLFLEISSVFPDFYLHLGGDEVDFTCWKSNPNIQAFMKKKGFTDFKQLESFYIQTLLDIVSDYDKGYVVWQEVFDNKVKVRPDTIIQVWREEMPVEYMLEMQDITRAGFRALLSAPWYLNRVKYGPDWKDMYKVEPLAFHGTPEQKALVIGGEACMWGEYVDSTNLVPRLWPRAGAVAERLWSSNLTTNIDFAFKRLSHFRCELVRRGIQAQPISVGYCEQEFEQT</sequence>
<keyword id="KW-1015">Disulfide bond</keyword>
<keyword id="KW-0325">Glycoprotein</keyword>
<keyword id="KW-0326">Glycosidase</keyword>
<keyword id="KW-0378">Hydrolase</keyword>
<keyword id="KW-0443">Lipid metabolism</keyword>
<keyword id="KW-0458">Lysosome</keyword>
<keyword id="KW-1185">Reference proteome</keyword>
<keyword id="KW-0732">Signal</keyword>
<keyword id="KW-0865">Zymogen</keyword>
<name>HEXA_MOUSE</name>
<dbReference type="EC" id="3.2.1.52" evidence="2"/>
<dbReference type="EMBL" id="X64331">
    <property type="protein sequence ID" value="CAA45615.1"/>
    <property type="molecule type" value="mRNA"/>
</dbReference>
<dbReference type="EMBL" id="U05837">
    <property type="protein sequence ID" value="AAC53246.1"/>
    <property type="molecule type" value="Genomic_DNA"/>
</dbReference>
<dbReference type="EMBL" id="U05824">
    <property type="protein sequence ID" value="AAC53246.1"/>
    <property type="status" value="JOINED"/>
    <property type="molecule type" value="Genomic_DNA"/>
</dbReference>
<dbReference type="EMBL" id="U05825">
    <property type="protein sequence ID" value="AAC53246.1"/>
    <property type="status" value="JOINED"/>
    <property type="molecule type" value="Genomic_DNA"/>
</dbReference>
<dbReference type="EMBL" id="U05826">
    <property type="protein sequence ID" value="AAC53246.1"/>
    <property type="status" value="JOINED"/>
    <property type="molecule type" value="Genomic_DNA"/>
</dbReference>
<dbReference type="EMBL" id="U05827">
    <property type="protein sequence ID" value="AAC53246.1"/>
    <property type="status" value="JOINED"/>
    <property type="molecule type" value="Genomic_DNA"/>
</dbReference>
<dbReference type="EMBL" id="U05828">
    <property type="protein sequence ID" value="AAC53246.1"/>
    <property type="status" value="JOINED"/>
    <property type="molecule type" value="Genomic_DNA"/>
</dbReference>
<dbReference type="EMBL" id="U05829">
    <property type="protein sequence ID" value="AAC53246.1"/>
    <property type="status" value="JOINED"/>
    <property type="molecule type" value="Genomic_DNA"/>
</dbReference>
<dbReference type="EMBL" id="U05830">
    <property type="protein sequence ID" value="AAC53246.1"/>
    <property type="status" value="JOINED"/>
    <property type="molecule type" value="Genomic_DNA"/>
</dbReference>
<dbReference type="EMBL" id="U05831">
    <property type="protein sequence ID" value="AAC53246.1"/>
    <property type="status" value="JOINED"/>
    <property type="molecule type" value="Genomic_DNA"/>
</dbReference>
<dbReference type="EMBL" id="U05832">
    <property type="protein sequence ID" value="AAC53246.1"/>
    <property type="status" value="JOINED"/>
    <property type="molecule type" value="Genomic_DNA"/>
</dbReference>
<dbReference type="EMBL" id="U05833">
    <property type="protein sequence ID" value="AAC53246.1"/>
    <property type="status" value="JOINED"/>
    <property type="molecule type" value="Genomic_DNA"/>
</dbReference>
<dbReference type="EMBL" id="U05834">
    <property type="protein sequence ID" value="AAC53246.1"/>
    <property type="status" value="JOINED"/>
    <property type="molecule type" value="Genomic_DNA"/>
</dbReference>
<dbReference type="EMBL" id="U05835">
    <property type="protein sequence ID" value="AAC53246.1"/>
    <property type="status" value="JOINED"/>
    <property type="molecule type" value="Genomic_DNA"/>
</dbReference>
<dbReference type="EMBL" id="U05836">
    <property type="protein sequence ID" value="AAC53246.1"/>
    <property type="status" value="JOINED"/>
    <property type="molecule type" value="Genomic_DNA"/>
</dbReference>
<dbReference type="EMBL" id="U07721">
    <property type="protein sequence ID" value="AAA18777.1"/>
    <property type="molecule type" value="Unassigned_DNA"/>
</dbReference>
<dbReference type="EMBL" id="U07709">
    <property type="protein sequence ID" value="AAA18777.1"/>
    <property type="status" value="JOINED"/>
    <property type="molecule type" value="Unassigned_DNA"/>
</dbReference>
<dbReference type="EMBL" id="U07710">
    <property type="protein sequence ID" value="AAA18777.1"/>
    <property type="status" value="JOINED"/>
    <property type="molecule type" value="Unassigned_DNA"/>
</dbReference>
<dbReference type="EMBL" id="U07711">
    <property type="protein sequence ID" value="AAA18777.1"/>
    <property type="status" value="JOINED"/>
    <property type="molecule type" value="Unassigned_DNA"/>
</dbReference>
<dbReference type="EMBL" id="U07712">
    <property type="protein sequence ID" value="AAA18777.1"/>
    <property type="status" value="JOINED"/>
    <property type="molecule type" value="Unassigned_DNA"/>
</dbReference>
<dbReference type="EMBL" id="U07713">
    <property type="protein sequence ID" value="AAA18777.1"/>
    <property type="status" value="JOINED"/>
    <property type="molecule type" value="Unassigned_DNA"/>
</dbReference>
<dbReference type="EMBL" id="U07714">
    <property type="protein sequence ID" value="AAA18777.1"/>
    <property type="status" value="JOINED"/>
    <property type="molecule type" value="Unassigned_DNA"/>
</dbReference>
<dbReference type="EMBL" id="U07715">
    <property type="protein sequence ID" value="AAA18777.1"/>
    <property type="status" value="JOINED"/>
    <property type="molecule type" value="Unassigned_DNA"/>
</dbReference>
<dbReference type="EMBL" id="U07716">
    <property type="protein sequence ID" value="AAA18777.1"/>
    <property type="status" value="JOINED"/>
    <property type="molecule type" value="Unassigned_DNA"/>
</dbReference>
<dbReference type="EMBL" id="U07717">
    <property type="protein sequence ID" value="AAA18777.1"/>
    <property type="status" value="JOINED"/>
    <property type="molecule type" value="Unassigned_DNA"/>
</dbReference>
<dbReference type="EMBL" id="U07718">
    <property type="protein sequence ID" value="AAA18777.1"/>
    <property type="status" value="JOINED"/>
    <property type="molecule type" value="Unassigned_DNA"/>
</dbReference>
<dbReference type="EMBL" id="U07719">
    <property type="protein sequence ID" value="AAA18777.1"/>
    <property type="status" value="JOINED"/>
    <property type="molecule type" value="Unassigned_DNA"/>
</dbReference>
<dbReference type="EMBL" id="U07720">
    <property type="protein sequence ID" value="AAA18777.1"/>
    <property type="status" value="JOINED"/>
    <property type="molecule type" value="Unassigned_DNA"/>
</dbReference>
<dbReference type="EMBL" id="U07631">
    <property type="protein sequence ID" value="AAA18775.1"/>
    <property type="molecule type" value="mRNA"/>
</dbReference>
<dbReference type="EMBL" id="X79061">
    <property type="status" value="NOT_ANNOTATED_CDS"/>
    <property type="molecule type" value="Genomic_DNA"/>
</dbReference>
<dbReference type="EMBL" id="X79062">
    <property type="status" value="NOT_ANNOTATED_CDS"/>
    <property type="molecule type" value="Genomic_DNA"/>
</dbReference>
<dbReference type="EMBL" id="AK075895">
    <property type="protein sequence ID" value="BAC36036.1"/>
    <property type="molecule type" value="mRNA"/>
</dbReference>
<dbReference type="EMBL" id="AK075911">
    <property type="protein sequence ID" value="BAC36049.1"/>
    <property type="molecule type" value="mRNA"/>
</dbReference>
<dbReference type="EMBL" id="AK144168">
    <property type="protein sequence ID" value="BAE25744.1"/>
    <property type="molecule type" value="mRNA"/>
</dbReference>
<dbReference type="EMBL" id="AK159814">
    <property type="protein sequence ID" value="BAE35394.1"/>
    <property type="molecule type" value="mRNA"/>
</dbReference>
<dbReference type="EMBL" id="CH466522">
    <property type="protein sequence ID" value="EDL25971.1"/>
    <property type="molecule type" value="Genomic_DNA"/>
</dbReference>
<dbReference type="EMBL" id="BC010755">
    <property type="protein sequence ID" value="AAH10755.1"/>
    <property type="molecule type" value="mRNA"/>
</dbReference>
<dbReference type="CCDS" id="CCDS23250.1"/>
<dbReference type="PIR" id="I48253">
    <property type="entry name" value="I48253"/>
</dbReference>
<dbReference type="RefSeq" id="NP_034551.2">
    <property type="nucleotide sequence ID" value="NM_010421.6"/>
</dbReference>
<dbReference type="SMR" id="P29416"/>
<dbReference type="BioGRID" id="200280">
    <property type="interactions" value="34"/>
</dbReference>
<dbReference type="ComplexPortal" id="CPX-689">
    <property type="entry name" value="Beta-hexosaminidase A complex"/>
</dbReference>
<dbReference type="ComplexPortal" id="CPX-691">
    <property type="entry name" value="Beta-hexosaminidase S complex"/>
</dbReference>
<dbReference type="FunCoup" id="P29416">
    <property type="interactions" value="1956"/>
</dbReference>
<dbReference type="IntAct" id="P29416">
    <property type="interactions" value="1"/>
</dbReference>
<dbReference type="STRING" id="10090.ENSMUSP00000026262"/>
<dbReference type="CAZy" id="GH20">
    <property type="family name" value="Glycoside Hydrolase Family 20"/>
</dbReference>
<dbReference type="GlyConnect" id="2151">
    <property type="glycosylation" value="1 N-Linked glycan (1 site)"/>
</dbReference>
<dbReference type="GlyCosmos" id="P29416">
    <property type="glycosylation" value="4 sites, 1 glycan"/>
</dbReference>
<dbReference type="GlyGen" id="P29416">
    <property type="glycosylation" value="5 sites, 2 N-linked glycans (1 site), 1 O-linked glycan (1 site)"/>
</dbReference>
<dbReference type="iPTMnet" id="P29416"/>
<dbReference type="PhosphoSitePlus" id="P29416"/>
<dbReference type="SwissPalm" id="P29416"/>
<dbReference type="jPOST" id="P29416"/>
<dbReference type="PaxDb" id="10090-ENSMUSP00000026262"/>
<dbReference type="PeptideAtlas" id="P29416"/>
<dbReference type="ProteomicsDB" id="273335"/>
<dbReference type="Pumba" id="P29416"/>
<dbReference type="DNASU" id="15211"/>
<dbReference type="Ensembl" id="ENSMUST00000026262.8">
    <property type="protein sequence ID" value="ENSMUSP00000026262.7"/>
    <property type="gene ID" value="ENSMUSG00000025232.9"/>
</dbReference>
<dbReference type="GeneID" id="15211"/>
<dbReference type="KEGG" id="mmu:15211"/>
<dbReference type="UCSC" id="uc009pxw.1">
    <property type="organism name" value="mouse"/>
</dbReference>
<dbReference type="AGR" id="MGI:96073"/>
<dbReference type="CTD" id="3073"/>
<dbReference type="MGI" id="MGI:96073">
    <property type="gene designation" value="Hexa"/>
</dbReference>
<dbReference type="VEuPathDB" id="HostDB:ENSMUSG00000025232"/>
<dbReference type="eggNOG" id="KOG2499">
    <property type="taxonomic scope" value="Eukaryota"/>
</dbReference>
<dbReference type="GeneTree" id="ENSGT00390000008107"/>
<dbReference type="HOGENOM" id="CLU_007082_0_0_1"/>
<dbReference type="InParanoid" id="P29416"/>
<dbReference type="OMA" id="KMWPRAA"/>
<dbReference type="OrthoDB" id="428480at2759"/>
<dbReference type="PhylomeDB" id="P29416"/>
<dbReference type="TreeFam" id="TF313036"/>
<dbReference type="Reactome" id="R-MMU-2022857">
    <property type="pathway name" value="Keratan sulfate degradation"/>
</dbReference>
<dbReference type="Reactome" id="R-MMU-2024101">
    <property type="pathway name" value="CS/DS degradation"/>
</dbReference>
<dbReference type="Reactome" id="R-MMU-2160916">
    <property type="pathway name" value="Hyaluronan uptake and degradation"/>
</dbReference>
<dbReference type="Reactome" id="R-MMU-9840310">
    <property type="pathway name" value="Glycosphingolipid catabolism"/>
</dbReference>
<dbReference type="BioGRID-ORCS" id="15211">
    <property type="hits" value="0 hits in 80 CRISPR screens"/>
</dbReference>
<dbReference type="ChiTaRS" id="Hexa">
    <property type="organism name" value="mouse"/>
</dbReference>
<dbReference type="PRO" id="PR:P29416"/>
<dbReference type="Proteomes" id="UP000000589">
    <property type="component" value="Chromosome 9"/>
</dbReference>
<dbReference type="RNAct" id="P29416">
    <property type="molecule type" value="protein"/>
</dbReference>
<dbReference type="Bgee" id="ENSMUSG00000025232">
    <property type="expression patterns" value="Expressed in stroma of bone marrow and 260 other cell types or tissues"/>
</dbReference>
<dbReference type="GO" id="GO:0042582">
    <property type="term" value="C:azurophil granule"/>
    <property type="evidence" value="ECO:0007669"/>
    <property type="project" value="Ensembl"/>
</dbReference>
<dbReference type="GO" id="GO:1905379">
    <property type="term" value="C:beta-N-acetylhexosaminidase complex"/>
    <property type="evidence" value="ECO:0000266"/>
    <property type="project" value="ComplexPortal"/>
</dbReference>
<dbReference type="GO" id="GO:0005829">
    <property type="term" value="C:cytosol"/>
    <property type="evidence" value="ECO:0007669"/>
    <property type="project" value="Ensembl"/>
</dbReference>
<dbReference type="GO" id="GO:0043202">
    <property type="term" value="C:lysosomal lumen"/>
    <property type="evidence" value="ECO:0000303"/>
    <property type="project" value="ComplexPortal"/>
</dbReference>
<dbReference type="GO" id="GO:0005764">
    <property type="term" value="C:lysosome"/>
    <property type="evidence" value="ECO:0000314"/>
    <property type="project" value="MGI"/>
</dbReference>
<dbReference type="GO" id="GO:0016020">
    <property type="term" value="C:membrane"/>
    <property type="evidence" value="ECO:0000314"/>
    <property type="project" value="MGI"/>
</dbReference>
<dbReference type="GO" id="GO:0008375">
    <property type="term" value="F:acetylglucosaminyltransferase activity"/>
    <property type="evidence" value="ECO:0007669"/>
    <property type="project" value="Ensembl"/>
</dbReference>
<dbReference type="GO" id="GO:0004563">
    <property type="term" value="F:beta-N-acetylhexosaminidase activity"/>
    <property type="evidence" value="ECO:0000314"/>
    <property type="project" value="MGI"/>
</dbReference>
<dbReference type="GO" id="GO:0046982">
    <property type="term" value="F:protein heterodimerization activity"/>
    <property type="evidence" value="ECO:0000266"/>
    <property type="project" value="MGI"/>
</dbReference>
<dbReference type="GO" id="GO:0007628">
    <property type="term" value="P:adult walking behavior"/>
    <property type="evidence" value="ECO:0000315"/>
    <property type="project" value="MGI"/>
</dbReference>
<dbReference type="GO" id="GO:0005975">
    <property type="term" value="P:carbohydrate metabolic process"/>
    <property type="evidence" value="ECO:0007669"/>
    <property type="project" value="InterPro"/>
</dbReference>
<dbReference type="GO" id="GO:0048667">
    <property type="term" value="P:cell morphogenesis involved in neuron differentiation"/>
    <property type="evidence" value="ECO:0000315"/>
    <property type="project" value="MGI"/>
</dbReference>
<dbReference type="GO" id="GO:0030209">
    <property type="term" value="P:dermatan sulfate proteoglycan catabolic process"/>
    <property type="evidence" value="ECO:0000316"/>
    <property type="project" value="MGI"/>
</dbReference>
<dbReference type="GO" id="GO:0006689">
    <property type="term" value="P:ganglioside catabolic process"/>
    <property type="evidence" value="ECO:0000315"/>
    <property type="project" value="MGI"/>
</dbReference>
<dbReference type="GO" id="GO:0006024">
    <property type="term" value="P:glycosaminoglycan biosynthetic process"/>
    <property type="evidence" value="ECO:0007669"/>
    <property type="project" value="Ensembl"/>
</dbReference>
<dbReference type="GO" id="GO:0030203">
    <property type="term" value="P:glycosaminoglycan metabolic process"/>
    <property type="evidence" value="ECO:0000315"/>
    <property type="project" value="ComplexPortal"/>
</dbReference>
<dbReference type="GO" id="GO:0030214">
    <property type="term" value="P:hyaluronan catabolic process"/>
    <property type="evidence" value="ECO:0000315"/>
    <property type="project" value="MGI"/>
</dbReference>
<dbReference type="GO" id="GO:0019915">
    <property type="term" value="P:lipid storage"/>
    <property type="evidence" value="ECO:0000315"/>
    <property type="project" value="MGI"/>
</dbReference>
<dbReference type="GO" id="GO:0007626">
    <property type="term" value="P:locomotory behavior"/>
    <property type="evidence" value="ECO:0000316"/>
    <property type="project" value="MGI"/>
</dbReference>
<dbReference type="GO" id="GO:0007040">
    <property type="term" value="P:lysosome organization"/>
    <property type="evidence" value="ECO:0000315"/>
    <property type="project" value="MGI"/>
</dbReference>
<dbReference type="GO" id="GO:0042552">
    <property type="term" value="P:myelination"/>
    <property type="evidence" value="ECO:0000316"/>
    <property type="project" value="MGI"/>
</dbReference>
<dbReference type="GO" id="GO:0050885">
    <property type="term" value="P:neuromuscular process controlling balance"/>
    <property type="evidence" value="ECO:0000316"/>
    <property type="project" value="MGI"/>
</dbReference>
<dbReference type="GO" id="GO:0050884">
    <property type="term" value="P:neuromuscular process controlling posture"/>
    <property type="evidence" value="ECO:0000315"/>
    <property type="project" value="MGI"/>
</dbReference>
<dbReference type="GO" id="GO:0007605">
    <property type="term" value="P:sensory perception of sound"/>
    <property type="evidence" value="ECO:0000316"/>
    <property type="project" value="MGI"/>
</dbReference>
<dbReference type="GO" id="GO:0019953">
    <property type="term" value="P:sexual reproduction"/>
    <property type="evidence" value="ECO:0000315"/>
    <property type="project" value="MGI"/>
</dbReference>
<dbReference type="GO" id="GO:0001501">
    <property type="term" value="P:skeletal system development"/>
    <property type="evidence" value="ECO:0000316"/>
    <property type="project" value="MGI"/>
</dbReference>
<dbReference type="CDD" id="cd06562">
    <property type="entry name" value="GH20_HexA_HexB-like"/>
    <property type="match status" value="1"/>
</dbReference>
<dbReference type="FunFam" id="3.20.20.80:FF:000049">
    <property type="entry name" value="Beta-hexosaminidase A"/>
    <property type="match status" value="1"/>
</dbReference>
<dbReference type="FunFam" id="3.30.379.10:FF:000001">
    <property type="entry name" value="Beta-hexosaminidase subunit beta"/>
    <property type="match status" value="1"/>
</dbReference>
<dbReference type="Gene3D" id="3.30.379.10">
    <property type="entry name" value="Chitobiase/beta-hexosaminidase domain 2-like"/>
    <property type="match status" value="1"/>
</dbReference>
<dbReference type="Gene3D" id="3.20.20.80">
    <property type="entry name" value="Glycosidases"/>
    <property type="match status" value="1"/>
</dbReference>
<dbReference type="InterPro" id="IPR025705">
    <property type="entry name" value="Beta_hexosaminidase_sua/sub"/>
</dbReference>
<dbReference type="InterPro" id="IPR015883">
    <property type="entry name" value="Glyco_hydro_20_cat"/>
</dbReference>
<dbReference type="InterPro" id="IPR017853">
    <property type="entry name" value="Glycoside_hydrolase_SF"/>
</dbReference>
<dbReference type="InterPro" id="IPR029018">
    <property type="entry name" value="Hex-like_dom2"/>
</dbReference>
<dbReference type="InterPro" id="IPR029019">
    <property type="entry name" value="HEX_eukaryotic_N"/>
</dbReference>
<dbReference type="PANTHER" id="PTHR22600">
    <property type="entry name" value="BETA-HEXOSAMINIDASE"/>
    <property type="match status" value="1"/>
</dbReference>
<dbReference type="PANTHER" id="PTHR22600:SF39">
    <property type="entry name" value="BETA-HEXOSAMINIDASE SUBUNIT ALPHA"/>
    <property type="match status" value="1"/>
</dbReference>
<dbReference type="Pfam" id="PF00728">
    <property type="entry name" value="Glyco_hydro_20"/>
    <property type="match status" value="1"/>
</dbReference>
<dbReference type="Pfam" id="PF14845">
    <property type="entry name" value="Glycohydro_20b2"/>
    <property type="match status" value="1"/>
</dbReference>
<dbReference type="PIRSF" id="PIRSF001093">
    <property type="entry name" value="B-hxosamndse_ab_euk"/>
    <property type="match status" value="1"/>
</dbReference>
<dbReference type="PRINTS" id="PR00738">
    <property type="entry name" value="GLHYDRLASE20"/>
</dbReference>
<dbReference type="SUPFAM" id="SSF51445">
    <property type="entry name" value="(Trans)glycosidases"/>
    <property type="match status" value="1"/>
</dbReference>
<dbReference type="SUPFAM" id="SSF55545">
    <property type="entry name" value="beta-N-acetylhexosaminidase-like domain"/>
    <property type="match status" value="1"/>
</dbReference>
<accession>P29416</accession>
<accession>Q64246</accession>
<accession>Q91XG3</accession>
<feature type="signal peptide" evidence="1">
    <location>
        <begin position="1"/>
        <end position="22"/>
    </location>
</feature>
<feature type="propeptide" id="PRO_0000011995" evidence="1">
    <location>
        <begin position="23"/>
        <end position="88"/>
    </location>
</feature>
<feature type="chain" id="PRO_0000011996" description="Beta-hexosaminidase subunit alpha">
    <location>
        <begin position="89"/>
        <end position="528"/>
    </location>
</feature>
<feature type="region of interest" description="Critical for hydrolysis GM2 gangliosides" evidence="1">
    <location>
        <begin position="422"/>
        <end position="423"/>
    </location>
</feature>
<feature type="active site" description="Proton donor" evidence="1">
    <location>
        <position position="323"/>
    </location>
</feature>
<feature type="glycosylation site" description="N-linked (GlcNAc...) asparagine" evidence="3">
    <location>
        <position position="115"/>
    </location>
</feature>
<feature type="glycosylation site" description="N-linked (GlcNAc...) asparagine" evidence="3">
    <location>
        <position position="157"/>
    </location>
</feature>
<feature type="glycosylation site" description="N-linked (GlcNAc...) asparagine" evidence="3">
    <location>
        <position position="295"/>
    </location>
</feature>
<feature type="glycosylation site" description="N-linked (GlcNAc...) asparagine" evidence="3">
    <location>
        <position position="487"/>
    </location>
</feature>
<feature type="disulfide bond" evidence="1">
    <location>
        <begin position="58"/>
        <end position="104"/>
    </location>
</feature>
<feature type="disulfide bond" evidence="1">
    <location>
        <begin position="277"/>
        <end position="328"/>
    </location>
</feature>
<feature type="disulfide bond" evidence="1">
    <location>
        <begin position="504"/>
        <end position="521"/>
    </location>
</feature>
<feature type="sequence conflict" description="In Ref. 1; CAA45615 and 2; AAC53246." evidence="5" ref="1 2">
    <original>A</original>
    <variation>G</variation>
    <location>
        <position position="56"/>
    </location>
</feature>
<feature type="sequence conflict" description="In Ref. 4; X79061/X79062." evidence="5" ref="4">
    <original>Q</original>
    <variation>E</variation>
    <location>
        <position position="237"/>
    </location>
</feature>
<feature type="sequence conflict" description="In Ref. 4; X79061/X79062." evidence="5" ref="4">
    <original>E</original>
    <variation>Q</variation>
    <location>
        <position position="455"/>
    </location>
</feature>
<gene>
    <name evidence="6" type="primary">Hexa</name>
</gene>
<proteinExistence type="evidence at protein level"/>